<sequence length="461" mass="51025">MRVLIKNGTVVNADGQAKQDLLIESGIVRQLGNNISPQLPYEEIDATGCYVFPGGVDVHTHFNIDVGIARSCDDFFTGTRAAACGGTTTIIDHMGFGPNGCRLRHQLEVYRGYAAHKAVIDYSFHGVIQHINHAILDEIPMIVEEGLSSFKLYLTYQYKLNDDEVLQALRRLHESGALTTVHPENDAAIASKRAEFIAAGLTAPRYHALSRPLECEAEAIARMINLAQIAGNAPLYIVHLSNGLGLDYLRLARANHQPVWVETCPQYLLLDERSYDTEDGMKFILSPPLRNVREQDKLWCGISDGAIDVVATDHCTFSMAQRLQISKGDFSRCPNGLPGVENRMQLLFSSGVMTGRITPERFVELTSAMPARLFGLWPQKGLLAPGSDGDVVIIDPRQSQQIQHRHLHDNADYSPWEGFTCQGAIVRTLSRGETIFCDGTFTGKAGRGRFLRRKPFVPPVL</sequence>
<feature type="chain" id="PRO_0000165937" description="D-phenylhydantoinase">
    <location>
        <begin position="1"/>
        <end position="461"/>
    </location>
</feature>
<feature type="binding site" evidence="1">
    <location>
        <position position="59"/>
    </location>
    <ligand>
        <name>a divalent metal cation</name>
        <dbReference type="ChEBI" id="CHEBI:60240"/>
        <label>1</label>
    </ligand>
</feature>
<feature type="binding site" evidence="1">
    <location>
        <position position="61"/>
    </location>
    <ligand>
        <name>a divalent metal cation</name>
        <dbReference type="ChEBI" id="CHEBI:60240"/>
        <label>1</label>
    </ligand>
</feature>
<feature type="binding site" description="via carbamate group" evidence="1">
    <location>
        <position position="151"/>
    </location>
    <ligand>
        <name>a divalent metal cation</name>
        <dbReference type="ChEBI" id="CHEBI:60240"/>
        <label>1</label>
    </ligand>
</feature>
<feature type="binding site" description="via carbamate group" evidence="1">
    <location>
        <position position="151"/>
    </location>
    <ligand>
        <name>a divalent metal cation</name>
        <dbReference type="ChEBI" id="CHEBI:60240"/>
        <label>2</label>
    </ligand>
</feature>
<feature type="binding site" evidence="1">
    <location>
        <position position="156"/>
    </location>
    <ligand>
        <name>substrate</name>
    </ligand>
</feature>
<feature type="binding site" evidence="1">
    <location>
        <position position="182"/>
    </location>
    <ligand>
        <name>a divalent metal cation</name>
        <dbReference type="ChEBI" id="CHEBI:60240"/>
        <label>2</label>
    </ligand>
</feature>
<feature type="binding site" evidence="1">
    <location>
        <position position="239"/>
    </location>
    <ligand>
        <name>a divalent metal cation</name>
        <dbReference type="ChEBI" id="CHEBI:60240"/>
        <label>2</label>
    </ligand>
</feature>
<feature type="binding site" evidence="1">
    <location>
        <position position="286"/>
    </location>
    <ligand>
        <name>substrate</name>
    </ligand>
</feature>
<feature type="binding site" evidence="1">
    <location>
        <position position="313"/>
    </location>
    <ligand>
        <name>a divalent metal cation</name>
        <dbReference type="ChEBI" id="CHEBI:60240"/>
        <label>1</label>
    </ligand>
</feature>
<feature type="binding site" evidence="1">
    <location>
        <position position="335"/>
    </location>
    <ligand>
        <name>substrate</name>
    </ligand>
</feature>
<feature type="modified residue" description="N6-carboxylysine" evidence="1">
    <location>
        <position position="151"/>
    </location>
</feature>
<proteinExistence type="evidence at protein level"/>
<dbReference type="EC" id="3.5.2.-" evidence="2"/>
<dbReference type="EMBL" id="U28375">
    <property type="protein sequence ID" value="AAA83054.1"/>
    <property type="status" value="ALT_INIT"/>
    <property type="molecule type" value="Genomic_DNA"/>
</dbReference>
<dbReference type="EMBL" id="U00096">
    <property type="protein sequence ID" value="AAC75911.2"/>
    <property type="molecule type" value="Genomic_DNA"/>
</dbReference>
<dbReference type="EMBL" id="AP009048">
    <property type="protein sequence ID" value="BAE76939.1"/>
    <property type="molecule type" value="Genomic_DNA"/>
</dbReference>
<dbReference type="PIR" id="A65071">
    <property type="entry name" value="A65071"/>
</dbReference>
<dbReference type="RefSeq" id="NP_417349.4">
    <property type="nucleotide sequence ID" value="NC_000913.3"/>
</dbReference>
<dbReference type="RefSeq" id="WP_001264442.1">
    <property type="nucleotide sequence ID" value="NZ_LN832404.1"/>
</dbReference>
<dbReference type="SMR" id="Q46806"/>
<dbReference type="BioGRID" id="4261249">
    <property type="interactions" value="15"/>
</dbReference>
<dbReference type="FunCoup" id="Q46806">
    <property type="interactions" value="597"/>
</dbReference>
<dbReference type="IntAct" id="Q46806">
    <property type="interactions" value="2"/>
</dbReference>
<dbReference type="STRING" id="511145.b2873"/>
<dbReference type="jPOST" id="Q46806"/>
<dbReference type="PaxDb" id="511145-b2873"/>
<dbReference type="EnsemblBacteria" id="AAC75911">
    <property type="protein sequence ID" value="AAC75911"/>
    <property type="gene ID" value="b2873"/>
</dbReference>
<dbReference type="GeneID" id="947359"/>
<dbReference type="KEGG" id="ecj:JW2841"/>
<dbReference type="KEGG" id="eco:b2873"/>
<dbReference type="KEGG" id="ecoc:C3026_15760"/>
<dbReference type="PATRIC" id="fig|1411691.4.peg.3861"/>
<dbReference type="EchoBASE" id="EB2868"/>
<dbReference type="eggNOG" id="COG0044">
    <property type="taxonomic scope" value="Bacteria"/>
</dbReference>
<dbReference type="HOGENOM" id="CLU_015572_2_0_6"/>
<dbReference type="InParanoid" id="Q46806"/>
<dbReference type="OMA" id="SAETHHM"/>
<dbReference type="OrthoDB" id="5687299at2"/>
<dbReference type="PhylomeDB" id="Q46806"/>
<dbReference type="BioCyc" id="EcoCyc:G7492-MONOMER"/>
<dbReference type="BioCyc" id="MetaCyc:G7492-MONOMER"/>
<dbReference type="SABIO-RK" id="Q46806"/>
<dbReference type="PRO" id="PR:Q46806"/>
<dbReference type="Proteomes" id="UP000000625">
    <property type="component" value="Chromosome"/>
</dbReference>
<dbReference type="GO" id="GO:0005829">
    <property type="term" value="C:cytosol"/>
    <property type="evidence" value="ECO:0000318"/>
    <property type="project" value="GO_Central"/>
</dbReference>
<dbReference type="GO" id="GO:0016812">
    <property type="term" value="F:hydrolase activity, acting on carbon-nitrogen (but not peptide) bonds, in cyclic amides"/>
    <property type="evidence" value="ECO:0000314"/>
    <property type="project" value="EcoliWiki"/>
</dbReference>
<dbReference type="GO" id="GO:0042802">
    <property type="term" value="F:identical protein binding"/>
    <property type="evidence" value="ECO:0000314"/>
    <property type="project" value="EcoCyc"/>
</dbReference>
<dbReference type="GO" id="GO:0046872">
    <property type="term" value="F:metal ion binding"/>
    <property type="evidence" value="ECO:0007669"/>
    <property type="project" value="UniProtKB-KW"/>
</dbReference>
<dbReference type="GO" id="GO:0006208">
    <property type="term" value="P:pyrimidine nucleobase catabolic process"/>
    <property type="evidence" value="ECO:0007669"/>
    <property type="project" value="InterPro"/>
</dbReference>
<dbReference type="CDD" id="cd01314">
    <property type="entry name" value="D-HYD"/>
    <property type="match status" value="1"/>
</dbReference>
<dbReference type="FunFam" id="3.20.20.140:FF:000026">
    <property type="entry name" value="D-phenylhydantoinase"/>
    <property type="match status" value="1"/>
</dbReference>
<dbReference type="Gene3D" id="3.20.20.140">
    <property type="entry name" value="Metal-dependent hydrolases"/>
    <property type="match status" value="1"/>
</dbReference>
<dbReference type="Gene3D" id="2.30.40.10">
    <property type="entry name" value="Urease, subunit C, domain 1"/>
    <property type="match status" value="1"/>
</dbReference>
<dbReference type="HAMAP" id="MF_01644">
    <property type="entry name" value="D_hydantoinase"/>
    <property type="match status" value="1"/>
</dbReference>
<dbReference type="InterPro" id="IPR006680">
    <property type="entry name" value="Amidohydro-rel"/>
</dbReference>
<dbReference type="InterPro" id="IPR023766">
    <property type="entry name" value="D_phenylhydantoinase"/>
</dbReference>
<dbReference type="InterPro" id="IPR011778">
    <property type="entry name" value="Hydantoinase/dihydroPyrase"/>
</dbReference>
<dbReference type="InterPro" id="IPR011059">
    <property type="entry name" value="Metal-dep_hydrolase_composite"/>
</dbReference>
<dbReference type="InterPro" id="IPR032466">
    <property type="entry name" value="Metal_Hydrolase"/>
</dbReference>
<dbReference type="InterPro" id="IPR050378">
    <property type="entry name" value="Metallo-dep_Hydrolases_sf"/>
</dbReference>
<dbReference type="NCBIfam" id="TIGR02033">
    <property type="entry name" value="D-hydantoinase"/>
    <property type="match status" value="1"/>
</dbReference>
<dbReference type="PANTHER" id="PTHR11647:SF1">
    <property type="entry name" value="COLLAPSIN RESPONSE MEDIATOR PROTEIN"/>
    <property type="match status" value="1"/>
</dbReference>
<dbReference type="PANTHER" id="PTHR11647">
    <property type="entry name" value="HYDRANTOINASE/DIHYDROPYRIMIDINASE FAMILY MEMBER"/>
    <property type="match status" value="1"/>
</dbReference>
<dbReference type="Pfam" id="PF01979">
    <property type="entry name" value="Amidohydro_1"/>
    <property type="match status" value="1"/>
</dbReference>
<dbReference type="SUPFAM" id="SSF51338">
    <property type="entry name" value="Composite domain of metallo-dependent hydrolases"/>
    <property type="match status" value="2"/>
</dbReference>
<dbReference type="SUPFAM" id="SSF51556">
    <property type="entry name" value="Metallo-dependent hydrolases"/>
    <property type="match status" value="1"/>
</dbReference>
<evidence type="ECO:0000250" key="1"/>
<evidence type="ECO:0000269" key="2">
    <source>
    </source>
</evidence>
<evidence type="ECO:0000305" key="3"/>
<name>PHYDA_ECOLI</name>
<comment type="function">
    <text evidence="2">Catalyzes the stereospecific hydrolysis of the cyclic amide bond of D-hydantoin derivatives with an aromatic side chains at the 5'-position. Has no activity on dihydropyrimidines. The physiological function is unknown.</text>
</comment>
<comment type="catalytic activity">
    <reaction evidence="2">
        <text>D-5-phenylhydantoin + H2O = N-carbamoyl-D-phenylglycine + H(+)</text>
        <dbReference type="Rhea" id="RHEA:51664"/>
        <dbReference type="ChEBI" id="CHEBI:15377"/>
        <dbReference type="ChEBI" id="CHEBI:15378"/>
        <dbReference type="ChEBI" id="CHEBI:140750"/>
        <dbReference type="ChEBI" id="CHEBI:140758"/>
    </reaction>
</comment>
<comment type="cofactor">
    <cofactor evidence="2 3">
        <name>Zn(2+)</name>
        <dbReference type="ChEBI" id="CHEBI:29105"/>
    </cofactor>
    <cofactor evidence="2 3">
        <name>Ni(2+)</name>
        <dbReference type="ChEBI" id="CHEBI:49786"/>
    </cofactor>
    <cofactor evidence="2 3">
        <name>Co(2+)</name>
        <dbReference type="ChEBI" id="CHEBI:48828"/>
    </cofactor>
    <cofactor evidence="2 3">
        <name>Mn(2+)</name>
        <dbReference type="ChEBI" id="CHEBI:29035"/>
    </cofactor>
    <text evidence="2 3">Binds 2 divalent metal cations per subunit. Can use zinc, nickel, cobalt or manganese.</text>
</comment>
<comment type="biophysicochemical properties">
    <kinetics>
        <KM evidence="2">7.8 mM for phenylhydantoin</KM>
        <KM evidence="2">32.8 mM for hydroxyphenylhydantoin</KM>
        <KM evidence="2">138 mM for hydantoin</KM>
        <Vmax evidence="2">12.6 umol/min/mg enzyme with hydroxyphenylhydantoin as substrate</Vmax>
        <Vmax evidence="2">3.3 umol/min/mg enzyme with phenylhydantoin as substrate</Vmax>
        <Vmax evidence="2">0.15 umol/min/mg enzyme with hydantoin as substrate</Vmax>
        <text>Hydantoin derivatives with an aliphatic or no side chain at their 5'-position results in a much lower level of activity than those with aromatic side chains at the 5'-position.</text>
    </kinetics>
    <phDependence>
        <text evidence="2">Optimum pH is 8-8.5.</text>
    </phDependence>
    <temperatureDependence>
        <text evidence="2">Optimum temperature is 45-50 degrees Celsius.</text>
    </temperatureDependence>
</comment>
<comment type="subunit">
    <text evidence="2">Homotetramer.</text>
</comment>
<comment type="PTM">
    <text evidence="1">Carboxylation allows a single lysine to coordinate two divalent metal cations.</text>
</comment>
<comment type="similarity">
    <text evidence="3">Belongs to the metallo-dependent hydrolases superfamily. Hydantoinase/dihydropyrimidinase family.</text>
</comment>
<comment type="sequence caution" evidence="3">
    <conflict type="erroneous initiation">
        <sequence resource="EMBL-CDS" id="AAA83054"/>
    </conflict>
    <text>Extended N-terminus.</text>
</comment>
<accession>Q46806</accession>
<accession>Q2M9W7</accession>
<organism>
    <name type="scientific">Escherichia coli (strain K12)</name>
    <dbReference type="NCBI Taxonomy" id="83333"/>
    <lineage>
        <taxon>Bacteria</taxon>
        <taxon>Pseudomonadati</taxon>
        <taxon>Pseudomonadota</taxon>
        <taxon>Gammaproteobacteria</taxon>
        <taxon>Enterobacterales</taxon>
        <taxon>Enterobacteriaceae</taxon>
        <taxon>Escherichia</taxon>
    </lineage>
</organism>
<reference key="1">
    <citation type="journal article" date="1997" name="Science">
        <title>The complete genome sequence of Escherichia coli K-12.</title>
        <authorList>
            <person name="Blattner F.R."/>
            <person name="Plunkett G. III"/>
            <person name="Bloch C.A."/>
            <person name="Perna N.T."/>
            <person name="Burland V."/>
            <person name="Riley M."/>
            <person name="Collado-Vides J."/>
            <person name="Glasner J.D."/>
            <person name="Rode C.K."/>
            <person name="Mayhew G.F."/>
            <person name="Gregor J."/>
            <person name="Davis N.W."/>
            <person name="Kirkpatrick H.A."/>
            <person name="Goeden M.A."/>
            <person name="Rose D.J."/>
            <person name="Mau B."/>
            <person name="Shao Y."/>
        </authorList>
    </citation>
    <scope>NUCLEOTIDE SEQUENCE [LARGE SCALE GENOMIC DNA]</scope>
    <source>
        <strain>K12 / MG1655 / ATCC 47076</strain>
    </source>
</reference>
<reference key="2">
    <citation type="journal article" date="2006" name="Mol. Syst. Biol.">
        <title>Highly accurate genome sequences of Escherichia coli K-12 strains MG1655 and W3110.</title>
        <authorList>
            <person name="Hayashi K."/>
            <person name="Morooka N."/>
            <person name="Yamamoto Y."/>
            <person name="Fujita K."/>
            <person name="Isono K."/>
            <person name="Choi S."/>
            <person name="Ohtsubo E."/>
            <person name="Baba T."/>
            <person name="Wanner B.L."/>
            <person name="Mori H."/>
            <person name="Horiuchi T."/>
        </authorList>
    </citation>
    <scope>NUCLEOTIDE SEQUENCE [LARGE SCALE GENOMIC DNA]</scope>
    <source>
        <strain>K12 / W3110 / ATCC 27325 / DSM 5911</strain>
    </source>
</reference>
<reference key="3">
    <citation type="journal article" date="2000" name="J. Bacteriol.">
        <title>Functional expression and characterization of the two cyclic amidohydrolase enzymes, allantoinase and a novel phenylhydantoinase, from Escherichia coli.</title>
        <authorList>
            <person name="Kim G.J."/>
            <person name="Lee D.E."/>
            <person name="Kim H.-S."/>
        </authorList>
    </citation>
    <scope>PROTEIN SEQUENCE OF 1-16</scope>
    <scope>FUNCTION</scope>
    <scope>CATALYTIC ACTIVITY</scope>
    <scope>COFACTOR</scope>
    <scope>BIOPHYSICOCHEMICAL PROPERTIES</scope>
    <scope>SUBUNIT</scope>
</reference>
<keyword id="KW-0903">Direct protein sequencing</keyword>
<keyword id="KW-0378">Hydrolase</keyword>
<keyword id="KW-0479">Metal-binding</keyword>
<keyword id="KW-1185">Reference proteome</keyword>
<protein>
    <recommendedName>
        <fullName>D-phenylhydantoinase</fullName>
        <ecNumber evidence="2">3.5.2.-</ecNumber>
    </recommendedName>
    <alternativeName>
        <fullName>Hydantoin-utilizing enzyme HyuA</fullName>
    </alternativeName>
</protein>
<gene>
    <name type="primary">hyuA</name>
    <name type="synonym">ygeZ</name>
    <name type="ordered locus">b2873</name>
    <name type="ordered locus">JW2841</name>
</gene>